<dbReference type="EC" id="3.5.-.-" evidence="1"/>
<dbReference type="EMBL" id="CP001804">
    <property type="protein sequence ID" value="ACY16436.1"/>
    <property type="molecule type" value="Genomic_DNA"/>
</dbReference>
<dbReference type="SMR" id="D0LI57"/>
<dbReference type="STRING" id="502025.Hoch_3937"/>
<dbReference type="KEGG" id="hoh:Hoch_3937"/>
<dbReference type="eggNOG" id="COG0251">
    <property type="taxonomic scope" value="Bacteria"/>
</dbReference>
<dbReference type="HOGENOM" id="CLU_100715_7_3_7"/>
<dbReference type="OrthoDB" id="9808943at2"/>
<dbReference type="Proteomes" id="UP000001880">
    <property type="component" value="Chromosome"/>
</dbReference>
<dbReference type="GO" id="GO:0005829">
    <property type="term" value="C:cytosol"/>
    <property type="evidence" value="ECO:0007669"/>
    <property type="project" value="TreeGrafter"/>
</dbReference>
<dbReference type="GO" id="GO:0019239">
    <property type="term" value="F:deaminase activity"/>
    <property type="evidence" value="ECO:0007669"/>
    <property type="project" value="TreeGrafter"/>
</dbReference>
<dbReference type="GO" id="GO:0019740">
    <property type="term" value="P:nitrogen utilization"/>
    <property type="evidence" value="ECO:0007669"/>
    <property type="project" value="UniProtKB-UniRule"/>
</dbReference>
<dbReference type="GO" id="GO:0006212">
    <property type="term" value="P:uracil catabolic process"/>
    <property type="evidence" value="ECO:0007669"/>
    <property type="project" value="UniProtKB-UniRule"/>
</dbReference>
<dbReference type="CDD" id="cd00448">
    <property type="entry name" value="YjgF_YER057c_UK114_family"/>
    <property type="match status" value="1"/>
</dbReference>
<dbReference type="Gene3D" id="3.30.1330.40">
    <property type="entry name" value="RutC-like"/>
    <property type="match status" value="1"/>
</dbReference>
<dbReference type="HAMAP" id="MF_00831">
    <property type="entry name" value="RutC"/>
    <property type="match status" value="1"/>
</dbReference>
<dbReference type="InterPro" id="IPR019898">
    <property type="entry name" value="RutC"/>
</dbReference>
<dbReference type="InterPro" id="IPR035959">
    <property type="entry name" value="RutC-like_sf"/>
</dbReference>
<dbReference type="InterPro" id="IPR006175">
    <property type="entry name" value="YjgF/YER057c/UK114"/>
</dbReference>
<dbReference type="NCBIfam" id="TIGR03610">
    <property type="entry name" value="RutC"/>
    <property type="match status" value="1"/>
</dbReference>
<dbReference type="PANTHER" id="PTHR11803">
    <property type="entry name" value="2-IMINOBUTANOATE/2-IMINOPROPANOATE DEAMINASE RIDA"/>
    <property type="match status" value="1"/>
</dbReference>
<dbReference type="PANTHER" id="PTHR11803:SF58">
    <property type="entry name" value="PROTEIN HMF1-RELATED"/>
    <property type="match status" value="1"/>
</dbReference>
<dbReference type="Pfam" id="PF01042">
    <property type="entry name" value="Ribonuc_L-PSP"/>
    <property type="match status" value="1"/>
</dbReference>
<dbReference type="SUPFAM" id="SSF55298">
    <property type="entry name" value="YjgF-like"/>
    <property type="match status" value="1"/>
</dbReference>
<organism>
    <name type="scientific">Haliangium ochraceum (strain DSM 14365 / JCM 11303 / SMP-2)</name>
    <dbReference type="NCBI Taxonomy" id="502025"/>
    <lineage>
        <taxon>Bacteria</taxon>
        <taxon>Pseudomonadati</taxon>
        <taxon>Myxococcota</taxon>
        <taxon>Polyangia</taxon>
        <taxon>Haliangiales</taxon>
        <taxon>Kofleriaceae</taxon>
        <taxon>Haliangium</taxon>
    </lineage>
</organism>
<comment type="function">
    <text evidence="1">Involved in pyrimidine catabolism. Catalyzes the deamination of 3-aminoacrylate to malonic semialdehyde, a reaction that can also occur spontaneously. RutC may facilitate the reaction and modulate the metabolic fitness, rather than catalyzing essential functions.</text>
</comment>
<comment type="catalytic activity">
    <reaction evidence="1">
        <text>(Z)-3-aminoacrylate + H2O + H(+) = 3-oxopropanoate + NH4(+)</text>
        <dbReference type="Rhea" id="RHEA:34947"/>
        <dbReference type="ChEBI" id="CHEBI:15377"/>
        <dbReference type="ChEBI" id="CHEBI:15378"/>
        <dbReference type="ChEBI" id="CHEBI:28938"/>
        <dbReference type="ChEBI" id="CHEBI:33190"/>
        <dbReference type="ChEBI" id="CHEBI:59894"/>
    </reaction>
</comment>
<comment type="similarity">
    <text evidence="1">Belongs to the RutC family.</text>
</comment>
<gene>
    <name evidence="1" type="primary">rutC</name>
    <name type="ordered locus">Hoch_3937</name>
</gene>
<sequence length="130" mass="14032">MPMKPINPSQFPKPIAPYSAGAMADNVVYVSGTLALGEGGQVLHVGDAKAQTRHVLETIKTTLEAAGGGMADITFNHIFVKSWDDYKAINEVYAEYFPGDKPARYCIQCGLVKPELLVEIASIAHLSPKE</sequence>
<proteinExistence type="inferred from homology"/>
<protein>
    <recommendedName>
        <fullName evidence="1">3-aminoacrylate deaminase RutC</fullName>
        <shortName evidence="1">3-AA deaminase</shortName>
        <ecNumber evidence="1">3.5.-.-</ecNumber>
    </recommendedName>
</protein>
<keyword id="KW-0378">Hydrolase</keyword>
<keyword id="KW-1185">Reference proteome</keyword>
<accession>D0LI57</accession>
<evidence type="ECO:0000255" key="1">
    <source>
        <dbReference type="HAMAP-Rule" id="MF_00831"/>
    </source>
</evidence>
<reference key="1">
    <citation type="journal article" date="2010" name="Stand. Genomic Sci.">
        <title>Complete genome sequence of Haliangium ochraceum type strain (SMP-2).</title>
        <authorList>
            <person name="Ivanova N."/>
            <person name="Daum C."/>
            <person name="Lang E."/>
            <person name="Abt B."/>
            <person name="Kopitz M."/>
            <person name="Saunders E."/>
            <person name="Lapidus A."/>
            <person name="Lucas S."/>
            <person name="Glavina Del Rio T."/>
            <person name="Nolan M."/>
            <person name="Tice H."/>
            <person name="Copeland A."/>
            <person name="Cheng J.F."/>
            <person name="Chen F."/>
            <person name="Bruce D."/>
            <person name="Goodwin L."/>
            <person name="Pitluck S."/>
            <person name="Mavromatis K."/>
            <person name="Pati A."/>
            <person name="Mikhailova N."/>
            <person name="Chen A."/>
            <person name="Palaniappan K."/>
            <person name="Land M."/>
            <person name="Hauser L."/>
            <person name="Chang Y.J."/>
            <person name="Jeffries C.D."/>
            <person name="Detter J.C."/>
            <person name="Brettin T."/>
            <person name="Rohde M."/>
            <person name="Goker M."/>
            <person name="Bristow J."/>
            <person name="Markowitz V."/>
            <person name="Eisen J.A."/>
            <person name="Hugenholtz P."/>
            <person name="Kyrpides N.C."/>
            <person name="Klenk H.P."/>
        </authorList>
    </citation>
    <scope>NUCLEOTIDE SEQUENCE [LARGE SCALE GENOMIC DNA]</scope>
    <source>
        <strain>DSM 14365 / CIP 107738 / JCM 11303 / AJ 13395 / SMP-2</strain>
    </source>
</reference>
<feature type="chain" id="PRO_0000402750" description="3-aminoacrylate deaminase RutC">
    <location>
        <begin position="1"/>
        <end position="130"/>
    </location>
</feature>
<name>RUTC_HALO1</name>